<dbReference type="EMBL" id="CP000608">
    <property type="protein sequence ID" value="ABO46112.1"/>
    <property type="molecule type" value="Genomic_DNA"/>
</dbReference>
<dbReference type="RefSeq" id="WP_003024583.1">
    <property type="nucleotide sequence ID" value="NC_009257.1"/>
</dbReference>
<dbReference type="SMR" id="A4IW10"/>
<dbReference type="KEGG" id="ftw:FTW_0126"/>
<dbReference type="HOGENOM" id="CLU_006301_6_2_6"/>
<dbReference type="GO" id="GO:0005829">
    <property type="term" value="C:cytosol"/>
    <property type="evidence" value="ECO:0007669"/>
    <property type="project" value="TreeGrafter"/>
</dbReference>
<dbReference type="GO" id="GO:0005525">
    <property type="term" value="F:GTP binding"/>
    <property type="evidence" value="ECO:0007669"/>
    <property type="project" value="UniProtKB-KW"/>
</dbReference>
<dbReference type="GO" id="GO:0003924">
    <property type="term" value="F:GTPase activity"/>
    <property type="evidence" value="ECO:0007669"/>
    <property type="project" value="UniProtKB-UniRule"/>
</dbReference>
<dbReference type="GO" id="GO:0003743">
    <property type="term" value="F:translation initiation factor activity"/>
    <property type="evidence" value="ECO:0007669"/>
    <property type="project" value="UniProtKB-UniRule"/>
</dbReference>
<dbReference type="CDD" id="cd01887">
    <property type="entry name" value="IF2_eIF5B"/>
    <property type="match status" value="1"/>
</dbReference>
<dbReference type="CDD" id="cd03702">
    <property type="entry name" value="IF2_mtIF2_II"/>
    <property type="match status" value="1"/>
</dbReference>
<dbReference type="CDD" id="cd03692">
    <property type="entry name" value="mtIF2_IVc"/>
    <property type="match status" value="1"/>
</dbReference>
<dbReference type="FunFam" id="2.40.30.10:FF:000007">
    <property type="entry name" value="Translation initiation factor IF-2"/>
    <property type="match status" value="1"/>
</dbReference>
<dbReference type="FunFam" id="2.40.30.10:FF:000008">
    <property type="entry name" value="Translation initiation factor IF-2"/>
    <property type="match status" value="1"/>
</dbReference>
<dbReference type="FunFam" id="3.40.50.10050:FF:000001">
    <property type="entry name" value="Translation initiation factor IF-2"/>
    <property type="match status" value="1"/>
</dbReference>
<dbReference type="FunFam" id="3.40.50.300:FF:000019">
    <property type="entry name" value="Translation initiation factor IF-2"/>
    <property type="match status" value="1"/>
</dbReference>
<dbReference type="Gene3D" id="3.40.50.300">
    <property type="entry name" value="P-loop containing nucleotide triphosphate hydrolases"/>
    <property type="match status" value="1"/>
</dbReference>
<dbReference type="Gene3D" id="3.30.56.50">
    <property type="entry name" value="Putative DNA-binding domain, N-terminal subdomain of bacterial translation initiation factor IF2"/>
    <property type="match status" value="1"/>
</dbReference>
<dbReference type="Gene3D" id="2.40.30.10">
    <property type="entry name" value="Translation factors"/>
    <property type="match status" value="2"/>
</dbReference>
<dbReference type="Gene3D" id="3.40.50.10050">
    <property type="entry name" value="Translation initiation factor IF- 2, domain 3"/>
    <property type="match status" value="1"/>
</dbReference>
<dbReference type="HAMAP" id="MF_00100_B">
    <property type="entry name" value="IF_2_B"/>
    <property type="match status" value="1"/>
</dbReference>
<dbReference type="InterPro" id="IPR009061">
    <property type="entry name" value="DNA-bd_dom_put_sf"/>
</dbReference>
<dbReference type="InterPro" id="IPR053905">
    <property type="entry name" value="EF-G-like_DII"/>
</dbReference>
<dbReference type="InterPro" id="IPR044145">
    <property type="entry name" value="IF2_II"/>
</dbReference>
<dbReference type="InterPro" id="IPR006847">
    <property type="entry name" value="IF2_N"/>
</dbReference>
<dbReference type="InterPro" id="IPR027417">
    <property type="entry name" value="P-loop_NTPase"/>
</dbReference>
<dbReference type="InterPro" id="IPR005225">
    <property type="entry name" value="Small_GTP-bd"/>
</dbReference>
<dbReference type="InterPro" id="IPR000795">
    <property type="entry name" value="T_Tr_GTP-bd_dom"/>
</dbReference>
<dbReference type="InterPro" id="IPR000178">
    <property type="entry name" value="TF_IF2_bacterial-like"/>
</dbReference>
<dbReference type="InterPro" id="IPR015760">
    <property type="entry name" value="TIF_IF2"/>
</dbReference>
<dbReference type="InterPro" id="IPR023115">
    <property type="entry name" value="TIF_IF2_dom3"/>
</dbReference>
<dbReference type="InterPro" id="IPR036925">
    <property type="entry name" value="TIF_IF2_dom3_sf"/>
</dbReference>
<dbReference type="InterPro" id="IPR009000">
    <property type="entry name" value="Transl_B-barrel_sf"/>
</dbReference>
<dbReference type="NCBIfam" id="TIGR00487">
    <property type="entry name" value="IF-2"/>
    <property type="match status" value="1"/>
</dbReference>
<dbReference type="NCBIfam" id="TIGR00231">
    <property type="entry name" value="small_GTP"/>
    <property type="match status" value="1"/>
</dbReference>
<dbReference type="PANTHER" id="PTHR43381:SF5">
    <property type="entry name" value="TR-TYPE G DOMAIN-CONTAINING PROTEIN"/>
    <property type="match status" value="1"/>
</dbReference>
<dbReference type="PANTHER" id="PTHR43381">
    <property type="entry name" value="TRANSLATION INITIATION FACTOR IF-2-RELATED"/>
    <property type="match status" value="1"/>
</dbReference>
<dbReference type="Pfam" id="PF22042">
    <property type="entry name" value="EF-G_D2"/>
    <property type="match status" value="1"/>
</dbReference>
<dbReference type="Pfam" id="PF00009">
    <property type="entry name" value="GTP_EFTU"/>
    <property type="match status" value="1"/>
</dbReference>
<dbReference type="Pfam" id="PF11987">
    <property type="entry name" value="IF-2"/>
    <property type="match status" value="1"/>
</dbReference>
<dbReference type="Pfam" id="PF04760">
    <property type="entry name" value="IF2_N"/>
    <property type="match status" value="2"/>
</dbReference>
<dbReference type="SUPFAM" id="SSF52156">
    <property type="entry name" value="Initiation factor IF2/eIF5b, domain 3"/>
    <property type="match status" value="1"/>
</dbReference>
<dbReference type="SUPFAM" id="SSF52540">
    <property type="entry name" value="P-loop containing nucleoside triphosphate hydrolases"/>
    <property type="match status" value="1"/>
</dbReference>
<dbReference type="SUPFAM" id="SSF46955">
    <property type="entry name" value="Putative DNA-binding domain"/>
    <property type="match status" value="1"/>
</dbReference>
<dbReference type="SUPFAM" id="SSF50447">
    <property type="entry name" value="Translation proteins"/>
    <property type="match status" value="2"/>
</dbReference>
<dbReference type="PROSITE" id="PS51722">
    <property type="entry name" value="G_TR_2"/>
    <property type="match status" value="1"/>
</dbReference>
<dbReference type="PROSITE" id="PS01176">
    <property type="entry name" value="IF2"/>
    <property type="match status" value="1"/>
</dbReference>
<keyword id="KW-0963">Cytoplasm</keyword>
<keyword id="KW-0342">GTP-binding</keyword>
<keyword id="KW-0396">Initiation factor</keyword>
<keyword id="KW-0547">Nucleotide-binding</keyword>
<keyword id="KW-0648">Protein biosynthesis</keyword>
<evidence type="ECO:0000250" key="1"/>
<evidence type="ECO:0000255" key="2">
    <source>
        <dbReference type="HAMAP-Rule" id="MF_00100"/>
    </source>
</evidence>
<evidence type="ECO:0000256" key="3">
    <source>
        <dbReference type="SAM" id="MobiDB-lite"/>
    </source>
</evidence>
<organism>
    <name type="scientific">Francisella tularensis subsp. tularensis (strain WY96-3418)</name>
    <dbReference type="NCBI Taxonomy" id="418136"/>
    <lineage>
        <taxon>Bacteria</taxon>
        <taxon>Pseudomonadati</taxon>
        <taxon>Pseudomonadota</taxon>
        <taxon>Gammaproteobacteria</taxon>
        <taxon>Thiotrichales</taxon>
        <taxon>Francisellaceae</taxon>
        <taxon>Francisella</taxon>
    </lineage>
</organism>
<proteinExistence type="inferred from homology"/>
<gene>
    <name evidence="2" type="primary">infB</name>
    <name type="ordered locus">FTW_0126</name>
</gene>
<feature type="chain" id="PRO_1000008247" description="Translation initiation factor IF-2">
    <location>
        <begin position="1"/>
        <end position="843"/>
    </location>
</feature>
<feature type="domain" description="tr-type G">
    <location>
        <begin position="345"/>
        <end position="512"/>
    </location>
</feature>
<feature type="region of interest" description="Disordered" evidence="3">
    <location>
        <begin position="198"/>
        <end position="219"/>
    </location>
</feature>
<feature type="region of interest" description="G1" evidence="1">
    <location>
        <begin position="354"/>
        <end position="361"/>
    </location>
</feature>
<feature type="region of interest" description="G2" evidence="1">
    <location>
        <begin position="379"/>
        <end position="383"/>
    </location>
</feature>
<feature type="region of interest" description="G3" evidence="1">
    <location>
        <begin position="400"/>
        <end position="403"/>
    </location>
</feature>
<feature type="region of interest" description="G4" evidence="1">
    <location>
        <begin position="454"/>
        <end position="457"/>
    </location>
</feature>
<feature type="region of interest" description="G5" evidence="1">
    <location>
        <begin position="490"/>
        <end position="492"/>
    </location>
</feature>
<feature type="compositionally biased region" description="Basic residues" evidence="3">
    <location>
        <begin position="207"/>
        <end position="219"/>
    </location>
</feature>
<feature type="binding site" evidence="2">
    <location>
        <begin position="354"/>
        <end position="361"/>
    </location>
    <ligand>
        <name>GTP</name>
        <dbReference type="ChEBI" id="CHEBI:37565"/>
    </ligand>
</feature>
<feature type="binding site" evidence="2">
    <location>
        <begin position="400"/>
        <end position="404"/>
    </location>
    <ligand>
        <name>GTP</name>
        <dbReference type="ChEBI" id="CHEBI:37565"/>
    </ligand>
</feature>
<feature type="binding site" evidence="2">
    <location>
        <begin position="454"/>
        <end position="457"/>
    </location>
    <ligand>
        <name>GTP</name>
        <dbReference type="ChEBI" id="CHEBI:37565"/>
    </ligand>
</feature>
<reference key="1">
    <citation type="journal article" date="2007" name="PLoS ONE">
        <title>Complete genomic characterization of a pathogenic A.II strain of Francisella tularensis subspecies tularensis.</title>
        <authorList>
            <person name="Beckstrom-Sternberg S.M."/>
            <person name="Auerbach R.K."/>
            <person name="Godbole S."/>
            <person name="Pearson J.V."/>
            <person name="Beckstrom-Sternberg J.S."/>
            <person name="Deng Z."/>
            <person name="Munk C."/>
            <person name="Kubota K."/>
            <person name="Zhou Y."/>
            <person name="Bruce D."/>
            <person name="Noronha J."/>
            <person name="Scheuermann R.H."/>
            <person name="Wang A."/>
            <person name="Wei X."/>
            <person name="Wang J."/>
            <person name="Hao J."/>
            <person name="Wagner D.M."/>
            <person name="Brettin T.S."/>
            <person name="Brown N."/>
            <person name="Gilna P."/>
            <person name="Keim P.S."/>
        </authorList>
    </citation>
    <scope>NUCLEOTIDE SEQUENCE [LARGE SCALE GENOMIC DNA]</scope>
    <source>
        <strain>WY96-3418</strain>
    </source>
</reference>
<accession>A4IW10</accession>
<protein>
    <recommendedName>
        <fullName evidence="2">Translation initiation factor IF-2</fullName>
    </recommendedName>
</protein>
<comment type="function">
    <text evidence="2">One of the essential components for the initiation of protein synthesis. Protects formylmethionyl-tRNA from spontaneous hydrolysis and promotes its binding to the 30S ribosomal subunits. Also involved in the hydrolysis of GTP during the formation of the 70S ribosomal complex.</text>
</comment>
<comment type="subcellular location">
    <subcellularLocation>
        <location evidence="2">Cytoplasm</location>
    </subcellularLocation>
</comment>
<comment type="similarity">
    <text evidence="2">Belongs to the TRAFAC class translation factor GTPase superfamily. Classic translation factor GTPase family. IF-2 subfamily.</text>
</comment>
<name>IF2_FRATW</name>
<sequence length="843" mass="92033">MAEITVGQLAQQTNKEVDALLKQLKSFGIEKSSEKDTLTPTEMKTLLEKINSAKNTATRKKVTSVKLDGKHKINVSVKRKRRVAKKVEQQESTTLEQPQELETMVQEVSQQVDIVKEQDNIEQIVENKEAVKVQEQRQAEIAKPVIKDSGFKITAMPEIKIEEIVAEDDEGLAASDKQAKKKAAKKVFSEAVNTNTKYKREEEEKKSKAKKAGGKGFKKANPRQLSQLAGDLESFDEFGAKKGKLKAPKVKKQEFTKPVENTVRTVEIHEGITVSELAQKMAVKGAEIVKVLFNMGVMATINQSLDQDTAILIVEEMGHKYTLHNENALEEAVTIVDRSSYKKISRAPVVTIMGHVDHGKTSLLDYIRQTRVVAGEAGGITQHIGAYSVKTDKGSITFLDTPGHEAFTSMRARGAKSTDIVILVVAADDGVMPQTEEAIQHAKAARVPIVVAVNKIDKPEADPDKVISELAQRNVIPESWGGDVMFVNVSAKTGEGVADLLEAVLLQSEVLELEAFAEGLAEGVVIESRLEKGRGPVATVLVQNGNLKQGDNILCGTEYGRVRAMHNDLGKKIKAAGPATPVEILGLSGVPAAGDEMVVIENEKKAKELAAQRSQKQKEAKIAQEQSLKLSNMFNNMGKEGEQQVLKIILKGDVQGSVEAIRESLLKLSTDEVKVDIIASGIGAITSSDVTLAVASTAVVIGFNVRADSAAKKLAETDGVEFRYYNIIYDLIDDVKKAMSGLLSPEMKEQIIGIAEVREVYRSSKFGSIAGCMVIEGVVKRTNPIRVLRNNVVIYEGTLESLKRFKDDASEVKKGLECGIGVKNYNDVREGDQIEVFEVAKEL</sequence>